<reference key="1">
    <citation type="journal article" date="2005" name="J. Bacteriol.">
        <title>Insights on evolution of virulence and resistance from the complete genome analysis of an early methicillin-resistant Staphylococcus aureus strain and a biofilm-producing methicillin-resistant Staphylococcus epidermidis strain.</title>
        <authorList>
            <person name="Gill S.R."/>
            <person name="Fouts D.E."/>
            <person name="Archer G.L."/>
            <person name="Mongodin E.F."/>
            <person name="DeBoy R.T."/>
            <person name="Ravel J."/>
            <person name="Paulsen I.T."/>
            <person name="Kolonay J.F."/>
            <person name="Brinkac L.M."/>
            <person name="Beanan M.J."/>
            <person name="Dodson R.J."/>
            <person name="Daugherty S.C."/>
            <person name="Madupu R."/>
            <person name="Angiuoli S.V."/>
            <person name="Durkin A.S."/>
            <person name="Haft D.H."/>
            <person name="Vamathevan J.J."/>
            <person name="Khouri H."/>
            <person name="Utterback T.R."/>
            <person name="Lee C."/>
            <person name="Dimitrov G."/>
            <person name="Jiang L."/>
            <person name="Qin H."/>
            <person name="Weidman J."/>
            <person name="Tran K."/>
            <person name="Kang K.H."/>
            <person name="Hance I.R."/>
            <person name="Nelson K.E."/>
            <person name="Fraser C.M."/>
        </authorList>
    </citation>
    <scope>NUCLEOTIDE SEQUENCE [LARGE SCALE GENOMIC DNA]</scope>
    <source>
        <strain>COL</strain>
    </source>
</reference>
<comment type="function">
    <text evidence="1">DNA-dependent RNA polymerase catalyzes the transcription of DNA into RNA using the four ribonucleoside triphosphates as substrates.</text>
</comment>
<comment type="catalytic activity">
    <reaction evidence="1">
        <text>RNA(n) + a ribonucleoside 5'-triphosphate = RNA(n+1) + diphosphate</text>
        <dbReference type="Rhea" id="RHEA:21248"/>
        <dbReference type="Rhea" id="RHEA-COMP:14527"/>
        <dbReference type="Rhea" id="RHEA-COMP:17342"/>
        <dbReference type="ChEBI" id="CHEBI:33019"/>
        <dbReference type="ChEBI" id="CHEBI:61557"/>
        <dbReference type="ChEBI" id="CHEBI:140395"/>
        <dbReference type="EC" id="2.7.7.6"/>
    </reaction>
</comment>
<comment type="subunit">
    <text evidence="1">The RNAP catalytic core consists of 2 alpha, 1 beta, 1 beta' and 1 omega subunit. When a sigma factor is associated with the core the holoenzyme is formed, which can initiate transcription.</text>
</comment>
<comment type="similarity">
    <text evidence="1">Belongs to the RNA polymerase beta chain family.</text>
</comment>
<accession>Q5HID3</accession>
<organism>
    <name type="scientific">Staphylococcus aureus (strain COL)</name>
    <dbReference type="NCBI Taxonomy" id="93062"/>
    <lineage>
        <taxon>Bacteria</taxon>
        <taxon>Bacillati</taxon>
        <taxon>Bacillota</taxon>
        <taxon>Bacilli</taxon>
        <taxon>Bacillales</taxon>
        <taxon>Staphylococcaceae</taxon>
        <taxon>Staphylococcus</taxon>
    </lineage>
</organism>
<protein>
    <recommendedName>
        <fullName evidence="1">DNA-directed RNA polymerase subunit beta</fullName>
        <shortName evidence="1">RNAP subunit beta</shortName>
        <ecNumber evidence="1">2.7.7.6</ecNumber>
    </recommendedName>
    <alternativeName>
        <fullName evidence="1">RNA polymerase subunit beta</fullName>
    </alternativeName>
    <alternativeName>
        <fullName evidence="1">Transcriptase subunit beta</fullName>
    </alternativeName>
</protein>
<dbReference type="EC" id="2.7.7.6" evidence="1"/>
<dbReference type="EMBL" id="CP000046">
    <property type="protein sequence ID" value="AAW37698.1"/>
    <property type="molecule type" value="Genomic_DNA"/>
</dbReference>
<dbReference type="RefSeq" id="WP_000918668.1">
    <property type="nucleotide sequence ID" value="NC_002951.2"/>
</dbReference>
<dbReference type="SMR" id="Q5HID3"/>
<dbReference type="KEGG" id="sac:SACOL0588"/>
<dbReference type="HOGENOM" id="CLU_000524_4_1_9"/>
<dbReference type="Proteomes" id="UP000000530">
    <property type="component" value="Chromosome"/>
</dbReference>
<dbReference type="GO" id="GO:0000428">
    <property type="term" value="C:DNA-directed RNA polymerase complex"/>
    <property type="evidence" value="ECO:0007669"/>
    <property type="project" value="UniProtKB-KW"/>
</dbReference>
<dbReference type="GO" id="GO:0003677">
    <property type="term" value="F:DNA binding"/>
    <property type="evidence" value="ECO:0007669"/>
    <property type="project" value="UniProtKB-UniRule"/>
</dbReference>
<dbReference type="GO" id="GO:0003899">
    <property type="term" value="F:DNA-directed RNA polymerase activity"/>
    <property type="evidence" value="ECO:0007669"/>
    <property type="project" value="UniProtKB-UniRule"/>
</dbReference>
<dbReference type="GO" id="GO:0032549">
    <property type="term" value="F:ribonucleoside binding"/>
    <property type="evidence" value="ECO:0007669"/>
    <property type="project" value="InterPro"/>
</dbReference>
<dbReference type="GO" id="GO:0006351">
    <property type="term" value="P:DNA-templated transcription"/>
    <property type="evidence" value="ECO:0007669"/>
    <property type="project" value="UniProtKB-UniRule"/>
</dbReference>
<dbReference type="CDD" id="cd00653">
    <property type="entry name" value="RNA_pol_B_RPB2"/>
    <property type="match status" value="1"/>
</dbReference>
<dbReference type="FunFam" id="3.90.1800.10:FF:000001">
    <property type="entry name" value="DNA-directed RNA polymerase subunit beta"/>
    <property type="match status" value="1"/>
</dbReference>
<dbReference type="Gene3D" id="2.40.50.100">
    <property type="match status" value="1"/>
</dbReference>
<dbReference type="Gene3D" id="2.40.50.150">
    <property type="match status" value="1"/>
</dbReference>
<dbReference type="Gene3D" id="3.90.1100.10">
    <property type="match status" value="3"/>
</dbReference>
<dbReference type="Gene3D" id="2.40.270.10">
    <property type="entry name" value="DNA-directed RNA polymerase, subunit 2, domain 6"/>
    <property type="match status" value="1"/>
</dbReference>
<dbReference type="Gene3D" id="3.90.1800.10">
    <property type="entry name" value="RNA polymerase alpha subunit dimerisation domain"/>
    <property type="match status" value="1"/>
</dbReference>
<dbReference type="Gene3D" id="3.90.1110.10">
    <property type="entry name" value="RNA polymerase Rpb2, domain 2"/>
    <property type="match status" value="1"/>
</dbReference>
<dbReference type="HAMAP" id="MF_01321">
    <property type="entry name" value="RNApol_bact_RpoB"/>
    <property type="match status" value="1"/>
</dbReference>
<dbReference type="InterPro" id="IPR019462">
    <property type="entry name" value="DNA-dir_RNA_pol_bsu_external_1"/>
</dbReference>
<dbReference type="InterPro" id="IPR015712">
    <property type="entry name" value="DNA-dir_RNA_pol_su2"/>
</dbReference>
<dbReference type="InterPro" id="IPR007120">
    <property type="entry name" value="DNA-dir_RNAP_su2_dom"/>
</dbReference>
<dbReference type="InterPro" id="IPR037033">
    <property type="entry name" value="DNA-dir_RNAP_su2_hyb_sf"/>
</dbReference>
<dbReference type="InterPro" id="IPR010243">
    <property type="entry name" value="RNA_pol_bsu_bac"/>
</dbReference>
<dbReference type="InterPro" id="IPR007121">
    <property type="entry name" value="RNA_pol_bsu_CS"/>
</dbReference>
<dbReference type="InterPro" id="IPR007644">
    <property type="entry name" value="RNA_pol_bsu_protrusion"/>
</dbReference>
<dbReference type="InterPro" id="IPR007642">
    <property type="entry name" value="RNA_pol_Rpb2_2"/>
</dbReference>
<dbReference type="InterPro" id="IPR037034">
    <property type="entry name" value="RNA_pol_Rpb2_2_sf"/>
</dbReference>
<dbReference type="InterPro" id="IPR007645">
    <property type="entry name" value="RNA_pol_Rpb2_3"/>
</dbReference>
<dbReference type="InterPro" id="IPR007641">
    <property type="entry name" value="RNA_pol_Rpb2_7"/>
</dbReference>
<dbReference type="InterPro" id="IPR014724">
    <property type="entry name" value="RNA_pol_RPB2_OB-fold"/>
</dbReference>
<dbReference type="NCBIfam" id="NF001616">
    <property type="entry name" value="PRK00405.1"/>
    <property type="match status" value="1"/>
</dbReference>
<dbReference type="NCBIfam" id="TIGR02013">
    <property type="entry name" value="rpoB"/>
    <property type="match status" value="1"/>
</dbReference>
<dbReference type="PANTHER" id="PTHR20856">
    <property type="entry name" value="DNA-DIRECTED RNA POLYMERASE I SUBUNIT 2"/>
    <property type="match status" value="1"/>
</dbReference>
<dbReference type="Pfam" id="PF04563">
    <property type="entry name" value="RNA_pol_Rpb2_1"/>
    <property type="match status" value="1"/>
</dbReference>
<dbReference type="Pfam" id="PF04561">
    <property type="entry name" value="RNA_pol_Rpb2_2"/>
    <property type="match status" value="2"/>
</dbReference>
<dbReference type="Pfam" id="PF04565">
    <property type="entry name" value="RNA_pol_Rpb2_3"/>
    <property type="match status" value="1"/>
</dbReference>
<dbReference type="Pfam" id="PF10385">
    <property type="entry name" value="RNA_pol_Rpb2_45"/>
    <property type="match status" value="1"/>
</dbReference>
<dbReference type="Pfam" id="PF00562">
    <property type="entry name" value="RNA_pol_Rpb2_6"/>
    <property type="match status" value="1"/>
</dbReference>
<dbReference type="Pfam" id="PF04560">
    <property type="entry name" value="RNA_pol_Rpb2_7"/>
    <property type="match status" value="1"/>
</dbReference>
<dbReference type="SUPFAM" id="SSF64484">
    <property type="entry name" value="beta and beta-prime subunits of DNA dependent RNA-polymerase"/>
    <property type="match status" value="1"/>
</dbReference>
<dbReference type="PROSITE" id="PS01166">
    <property type="entry name" value="RNA_POL_BETA"/>
    <property type="match status" value="1"/>
</dbReference>
<feature type="chain" id="PRO_0000047958" description="DNA-directed RNA polymerase subunit beta">
    <location>
        <begin position="1"/>
        <end position="1183"/>
    </location>
</feature>
<name>RPOB_STAAC</name>
<proteinExistence type="inferred from homology"/>
<evidence type="ECO:0000255" key="1">
    <source>
        <dbReference type="HAMAP-Rule" id="MF_01321"/>
    </source>
</evidence>
<sequence>MAGQVVQYGRHRKRRNYARISEVLELPNLIEIQTKSYEWFLREGLIEMFRDISPIEDFTGNLSLEFVDYRLGEPKYDLEESKNRDATYAAPLRVKVRLIIKETGEVKEQEVFMGDFPLMTDTGTFVINGAERVIVSQLVRSPSVYFNEKIDKNGRENYDATIIPNRGAWLEYETDAKDVVYVRIDRTRKLPLTVLLRALGFSSDQEIVDLLGDNEYLRNTLEKDGTENTEQALLEIYERLRPGEPPTVENAKSLLYSRFFDPKRYDLASVGRYKTNKKLHLKHRLFNQKLAEPIVNTETGEIVVEEGTVLDRRKIDEIMDVLESNANSEVFELHGSVIDEPVEIQSIKVYVPNDDEGRTTTVIGNAFPDSEVKCITPADIIASMSYFFNLLSGIGYTDDIDHLGNRRLRSVGELLQNQFRIGLSRMERVVRERMSIQDTESITPQQLINIRPVIASIKEFFGSSQLSQFMDQANPLAELTHKRRLSALGPGGLTRERAQMEVRDVHYSHYGRMCPIETPEGPNIGLINSLSSYARVNEFGFIETPYRKVDLDTHAITDQIDYLTADEEDSYVVAQANSKLDENGRFMDDEVVCRFRGNNTVMAKEKMDYMDVSPKQVVSAATACIPFLENDDSNRALMGANMQRQAVPLMNPEAPFVGTGMEHVAARDSGAAITAKHRGRVEHVESNEILVRRLVEENGVEHEGELDRYPLAKFKRSNSGTCYNQRPIVAVGDVVEYNEILADGPSMELGEMALGRNVVVGFMTWDGYNYEDAVIMSERLVKDDVYTSIHIEEYESEVRDTKLGPEEITRDIPNVSESALKNLDDRGIVYIGAEVKDGDILVGKVTPKGVTELTAEERLLHAIFGEKAREVRDTLLRVPHGAGGIVLDVKVFNREEGDDTLSPGVNQLVRVYIVQKRKIHVGDKMCGRHGNKGVISKIVPEEDMPYLPDGRPIDIMLNPLGVPSRMNIGQVLELHLGMAAKNLGIHVASPVFDGANDDDVWSTIEEAGMARDGKTVLYDGRTGEPFDNRISVGVMYMLKLAHMVDDKLHARSTGPYSLVTQQPLGGKAQFGGQRFGEMEVWALEAYGAAYTLQEILTYKSDDTVGRVKTYEAIVKGENISRPSVPESFRVLMKELQSLGLDVKVMDEQDNEIEMTDVDDDDVVERKVDLQQNDAPETQKEVTD</sequence>
<keyword id="KW-0240">DNA-directed RNA polymerase</keyword>
<keyword id="KW-0548">Nucleotidyltransferase</keyword>
<keyword id="KW-0804">Transcription</keyword>
<keyword id="KW-0808">Transferase</keyword>
<gene>
    <name evidence="1" type="primary">rpoB</name>
    <name type="ordered locus">SACOL0588</name>
</gene>